<feature type="initiator methionine" description="Removed" evidence="1">
    <location>
        <position position="1"/>
    </location>
</feature>
<feature type="chain" id="PRO_0000090514" description="Photosystem II D2 protein">
    <location>
        <begin position="2"/>
        <end position="353"/>
    </location>
</feature>
<feature type="transmembrane region" description="Helical" evidence="2">
    <location>
        <begin position="41"/>
        <end position="61"/>
    </location>
</feature>
<feature type="transmembrane region" description="Helical" evidence="2">
    <location>
        <begin position="125"/>
        <end position="141"/>
    </location>
</feature>
<feature type="transmembrane region" description="Helical" evidence="2">
    <location>
        <begin position="153"/>
        <end position="166"/>
    </location>
</feature>
<feature type="transmembrane region" description="Helical" evidence="2">
    <location>
        <begin position="208"/>
        <end position="228"/>
    </location>
</feature>
<feature type="transmembrane region" description="Helical" evidence="2">
    <location>
        <begin position="279"/>
        <end position="295"/>
    </location>
</feature>
<feature type="binding site" description="axial binding residue" evidence="2">
    <location>
        <position position="118"/>
    </location>
    <ligand>
        <name>chlorophyll a</name>
        <dbReference type="ChEBI" id="CHEBI:58416"/>
        <label>ChlzD2</label>
    </ligand>
    <ligandPart>
        <name>Mg</name>
        <dbReference type="ChEBI" id="CHEBI:25107"/>
    </ligandPart>
</feature>
<feature type="binding site" evidence="2">
    <location>
        <position position="130"/>
    </location>
    <ligand>
        <name>pheophytin a</name>
        <dbReference type="ChEBI" id="CHEBI:136840"/>
        <label>D2</label>
    </ligand>
</feature>
<feature type="binding site" evidence="2">
    <location>
        <position position="143"/>
    </location>
    <ligand>
        <name>pheophytin a</name>
        <dbReference type="ChEBI" id="CHEBI:136840"/>
        <label>D2</label>
    </ligand>
</feature>
<feature type="binding site" description="axial binding residue" evidence="2">
    <location>
        <position position="198"/>
    </location>
    <ligand>
        <name>chlorophyll a</name>
        <dbReference type="ChEBI" id="CHEBI:58416"/>
        <label>PD2</label>
    </ligand>
    <ligandPart>
        <name>Mg</name>
        <dbReference type="ChEBI" id="CHEBI:25107"/>
    </ligandPart>
</feature>
<feature type="binding site" evidence="2">
    <location>
        <position position="215"/>
    </location>
    <ligand>
        <name>a plastoquinone</name>
        <dbReference type="ChEBI" id="CHEBI:17757"/>
        <label>Q(A)</label>
    </ligand>
</feature>
<feature type="binding site" evidence="2">
    <location>
        <position position="215"/>
    </location>
    <ligand>
        <name>Fe cation</name>
        <dbReference type="ChEBI" id="CHEBI:24875"/>
        <note>ligand shared with heterodimeric partner</note>
    </ligand>
</feature>
<feature type="binding site" evidence="2">
    <location>
        <position position="262"/>
    </location>
    <ligand>
        <name>a plastoquinone</name>
        <dbReference type="ChEBI" id="CHEBI:17757"/>
        <label>Q(A)</label>
    </ligand>
</feature>
<feature type="binding site" evidence="2">
    <location>
        <position position="269"/>
    </location>
    <ligand>
        <name>Fe cation</name>
        <dbReference type="ChEBI" id="CHEBI:24875"/>
        <note>ligand shared with heterodimeric partner</note>
    </ligand>
</feature>
<feature type="modified residue" description="N-acetylthreonine" evidence="1">
    <location>
        <position position="2"/>
    </location>
</feature>
<feature type="modified residue" description="Phosphothreonine" evidence="1">
    <location>
        <position position="2"/>
    </location>
</feature>
<protein>
    <recommendedName>
        <fullName evidence="2">Photosystem II D2 protein</fullName>
        <shortName evidence="2">PSII D2 protein</shortName>
        <ecNumber evidence="2">1.10.3.9</ecNumber>
    </recommendedName>
    <alternativeName>
        <fullName evidence="2">Photosystem Q(A) protein</fullName>
    </alternativeName>
</protein>
<sequence>MTIALGRVTKEENDLFDIMDDWLRRDRFVFVGWSGLLLFPCAYFALGGWFTGTTFVTSWYTHGLASSYLEGCNFLTAAVSTPANSLAHSLLLLWGPEAQGDFTRWCQLGGLWTFVALHGAFALIGFMLRQFELARSVQLRPYNAISFSGPIAVFVSVFLIYPLGQSGWFFAPSFGVAAIFRFILFFQGFHNWTLNPFHMMGVAGVLGAALLCAIHGATVENTLFEDGDGANTFRAFNPTQAEETYSMVTANRFWSQIFGVAFSNKRWLHFFMLFVPVTGLWMSAIGVVGLALNLRAYDFVSQEIRAAEDPEFETFYTKNILLNEGIRAWMAAQDQPHENLIFPEEVLPRGNAL</sequence>
<comment type="function">
    <text evidence="2">Photosystem II (PSII) is a light-driven water:plastoquinone oxidoreductase that uses light energy to abstract electrons from H(2)O, generating O(2) and a proton gradient subsequently used for ATP formation. It consists of a core antenna complex that captures photons, and an electron transfer chain that converts photonic excitation into a charge separation. The D1/D2 (PsbA/PsbD) reaction center heterodimer binds P680, the primary electron donor of PSII as well as several subsequent electron acceptors. D2 is needed for assembly of a stable PSII complex.</text>
</comment>
<comment type="catalytic activity">
    <reaction evidence="2">
        <text>2 a plastoquinone + 4 hnu + 2 H2O = 2 a plastoquinol + O2</text>
        <dbReference type="Rhea" id="RHEA:36359"/>
        <dbReference type="Rhea" id="RHEA-COMP:9561"/>
        <dbReference type="Rhea" id="RHEA-COMP:9562"/>
        <dbReference type="ChEBI" id="CHEBI:15377"/>
        <dbReference type="ChEBI" id="CHEBI:15379"/>
        <dbReference type="ChEBI" id="CHEBI:17757"/>
        <dbReference type="ChEBI" id="CHEBI:30212"/>
        <dbReference type="ChEBI" id="CHEBI:62192"/>
        <dbReference type="EC" id="1.10.3.9"/>
    </reaction>
</comment>
<comment type="cofactor">
    <text evidence="2">The D1/D2 heterodimer binds P680, chlorophylls that are the primary electron donor of PSII, and subsequent electron acceptors. It shares a non-heme iron and each subunit binds pheophytin, quinone, additional chlorophylls, carotenoids and lipids. There is also a Cl(-1) ion associated with D1 and D2, which is required for oxygen evolution. The PSII complex binds additional chlorophylls, carotenoids and specific lipids.</text>
</comment>
<comment type="subunit">
    <text evidence="2">PSII is composed of 1 copy each of membrane proteins PsbA, PsbB, PsbC, PsbD, PsbE, PsbF, PsbH, PsbI, PsbJ, PsbK, PsbL, PsbM, PsbT, PsbX, PsbY, PsbZ, Psb30/Ycf12, at least 3 peripheral proteins of the oxygen-evolving complex and a large number of cofactors. It forms dimeric complexes.</text>
</comment>
<comment type="subcellular location">
    <subcellularLocation>
        <location evidence="2">Plastid</location>
        <location evidence="2">Chloroplast thylakoid membrane</location>
        <topology evidence="2">Multi-pass membrane protein</topology>
    </subcellularLocation>
</comment>
<comment type="miscellaneous">
    <text evidence="2">2 of the reaction center chlorophylls (ChlD1 and ChlD2) are entirely coordinated by water.</text>
</comment>
<comment type="similarity">
    <text evidence="2">Belongs to the reaction center PufL/M/PsbA/D family.</text>
</comment>
<accession>Q6ENJ1</accession>
<name>PSBD_ORYNI</name>
<geneLocation type="chloroplast"/>
<keyword id="KW-0007">Acetylation</keyword>
<keyword id="KW-0148">Chlorophyll</keyword>
<keyword id="KW-0150">Chloroplast</keyword>
<keyword id="KW-0157">Chromophore</keyword>
<keyword id="KW-0249">Electron transport</keyword>
<keyword id="KW-0408">Iron</keyword>
<keyword id="KW-0460">Magnesium</keyword>
<keyword id="KW-0472">Membrane</keyword>
<keyword id="KW-0479">Metal-binding</keyword>
<keyword id="KW-0560">Oxidoreductase</keyword>
<keyword id="KW-0597">Phosphoprotein</keyword>
<keyword id="KW-0602">Photosynthesis</keyword>
<keyword id="KW-0604">Photosystem II</keyword>
<keyword id="KW-0934">Plastid</keyword>
<keyword id="KW-1185">Reference proteome</keyword>
<keyword id="KW-0793">Thylakoid</keyword>
<keyword id="KW-0812">Transmembrane</keyword>
<keyword id="KW-1133">Transmembrane helix</keyword>
<keyword id="KW-0813">Transport</keyword>
<organism>
    <name type="scientific">Oryza nivara</name>
    <name type="common">Indian wild rice</name>
    <name type="synonym">Oryza sativa f. spontanea</name>
    <dbReference type="NCBI Taxonomy" id="4536"/>
    <lineage>
        <taxon>Eukaryota</taxon>
        <taxon>Viridiplantae</taxon>
        <taxon>Streptophyta</taxon>
        <taxon>Embryophyta</taxon>
        <taxon>Tracheophyta</taxon>
        <taxon>Spermatophyta</taxon>
        <taxon>Magnoliopsida</taxon>
        <taxon>Liliopsida</taxon>
        <taxon>Poales</taxon>
        <taxon>Poaceae</taxon>
        <taxon>BOP clade</taxon>
        <taxon>Oryzoideae</taxon>
        <taxon>Oryzeae</taxon>
        <taxon>Oryzinae</taxon>
        <taxon>Oryza</taxon>
    </lineage>
</organism>
<gene>
    <name evidence="2" type="primary">psbD</name>
</gene>
<proteinExistence type="inferred from homology"/>
<reference key="1">
    <citation type="journal article" date="2004" name="Gene">
        <title>The complete nucleotide sequence of wild rice (Oryza nivara) chloroplast genome: first genome wide comparative sequence analysis of wild and cultivated rice.</title>
        <authorList>
            <person name="Masood M.S."/>
            <person name="Nishikawa T."/>
            <person name="Fukuoka S."/>
            <person name="Njenga P.K."/>
            <person name="Tsudzuki T."/>
            <person name="Kadowaki K."/>
        </authorList>
    </citation>
    <scope>NUCLEOTIDE SEQUENCE [LARGE SCALE GENOMIC DNA]</scope>
    <source>
        <strain evidence="3">cv. SL10</strain>
    </source>
</reference>
<evidence type="ECO:0000250" key="1">
    <source>
        <dbReference type="UniProtKB" id="P56761"/>
    </source>
</evidence>
<evidence type="ECO:0000255" key="2">
    <source>
        <dbReference type="HAMAP-Rule" id="MF_01383"/>
    </source>
</evidence>
<evidence type="ECO:0000312" key="3">
    <source>
        <dbReference type="Proteomes" id="UP000006591"/>
    </source>
</evidence>
<dbReference type="EC" id="1.10.3.9" evidence="2"/>
<dbReference type="EMBL" id="AP006728">
    <property type="protein sequence ID" value="BAD26761.1"/>
    <property type="molecule type" value="Genomic_DNA"/>
</dbReference>
<dbReference type="RefSeq" id="YP_052732.1">
    <property type="nucleotide sequence ID" value="NC_005973.1"/>
</dbReference>
<dbReference type="SMR" id="Q6ENJ1"/>
<dbReference type="STRING" id="4536.Q6ENJ1"/>
<dbReference type="GeneID" id="2885950"/>
<dbReference type="eggNOG" id="ENOG502QWJF">
    <property type="taxonomic scope" value="Eukaryota"/>
</dbReference>
<dbReference type="Proteomes" id="UP000006591">
    <property type="component" value="Chloroplast"/>
</dbReference>
<dbReference type="GO" id="GO:0009535">
    <property type="term" value="C:chloroplast thylakoid membrane"/>
    <property type="evidence" value="ECO:0007669"/>
    <property type="project" value="UniProtKB-SubCell"/>
</dbReference>
<dbReference type="GO" id="GO:0009523">
    <property type="term" value="C:photosystem II"/>
    <property type="evidence" value="ECO:0007669"/>
    <property type="project" value="UniProtKB-KW"/>
</dbReference>
<dbReference type="GO" id="GO:0009536">
    <property type="term" value="C:plastid"/>
    <property type="evidence" value="ECO:0000305"/>
    <property type="project" value="Gramene"/>
</dbReference>
<dbReference type="GO" id="GO:0016168">
    <property type="term" value="F:chlorophyll binding"/>
    <property type="evidence" value="ECO:0007669"/>
    <property type="project" value="UniProtKB-UniRule"/>
</dbReference>
<dbReference type="GO" id="GO:0045156">
    <property type="term" value="F:electron transporter, transferring electrons within the cyclic electron transport pathway of photosynthesis activity"/>
    <property type="evidence" value="ECO:0007669"/>
    <property type="project" value="InterPro"/>
</dbReference>
<dbReference type="GO" id="GO:0005506">
    <property type="term" value="F:iron ion binding"/>
    <property type="evidence" value="ECO:0007669"/>
    <property type="project" value="UniProtKB-UniRule"/>
</dbReference>
<dbReference type="GO" id="GO:0010242">
    <property type="term" value="F:oxygen evolving activity"/>
    <property type="evidence" value="ECO:0007669"/>
    <property type="project" value="UniProtKB-EC"/>
</dbReference>
<dbReference type="GO" id="GO:0009772">
    <property type="term" value="P:photosynthetic electron transport in photosystem II"/>
    <property type="evidence" value="ECO:0007669"/>
    <property type="project" value="InterPro"/>
</dbReference>
<dbReference type="CDD" id="cd09288">
    <property type="entry name" value="Photosystem-II_D2"/>
    <property type="match status" value="1"/>
</dbReference>
<dbReference type="FunFam" id="1.20.85.10:FF:000001">
    <property type="entry name" value="photosystem II D2 protein-like"/>
    <property type="match status" value="1"/>
</dbReference>
<dbReference type="Gene3D" id="1.20.85.10">
    <property type="entry name" value="Photosystem II protein D1-like"/>
    <property type="match status" value="1"/>
</dbReference>
<dbReference type="HAMAP" id="MF_01383">
    <property type="entry name" value="PSII_PsbD_D2"/>
    <property type="match status" value="1"/>
</dbReference>
<dbReference type="InterPro" id="IPR055266">
    <property type="entry name" value="D1/D2"/>
</dbReference>
<dbReference type="InterPro" id="IPR036854">
    <property type="entry name" value="Photo_II_D1/D2_sf"/>
</dbReference>
<dbReference type="InterPro" id="IPR000484">
    <property type="entry name" value="Photo_RC_L/M"/>
</dbReference>
<dbReference type="InterPro" id="IPR055265">
    <property type="entry name" value="Photo_RC_L/M_CS"/>
</dbReference>
<dbReference type="InterPro" id="IPR005868">
    <property type="entry name" value="PSII_PsbD/D2"/>
</dbReference>
<dbReference type="NCBIfam" id="TIGR01152">
    <property type="entry name" value="psbD"/>
    <property type="match status" value="1"/>
</dbReference>
<dbReference type="PANTHER" id="PTHR33149:SF12">
    <property type="entry name" value="PHOTOSYSTEM II D2 PROTEIN"/>
    <property type="match status" value="1"/>
</dbReference>
<dbReference type="PANTHER" id="PTHR33149">
    <property type="entry name" value="PHOTOSYSTEM II PROTEIN D1"/>
    <property type="match status" value="1"/>
</dbReference>
<dbReference type="Pfam" id="PF00124">
    <property type="entry name" value="Photo_RC"/>
    <property type="match status" value="1"/>
</dbReference>
<dbReference type="PRINTS" id="PR00256">
    <property type="entry name" value="REACTNCENTRE"/>
</dbReference>
<dbReference type="SUPFAM" id="SSF81483">
    <property type="entry name" value="Bacterial photosystem II reaction centre, L and M subunits"/>
    <property type="match status" value="1"/>
</dbReference>
<dbReference type="PROSITE" id="PS00244">
    <property type="entry name" value="REACTION_CENTER"/>
    <property type="match status" value="1"/>
</dbReference>